<gene>
    <name type="primary">APOL5</name>
</gene>
<dbReference type="EMBL" id="AY014878">
    <property type="protein sequence ID" value="AAK07723.1"/>
    <property type="molecule type" value="mRNA"/>
</dbReference>
<dbReference type="EMBL" id="AL049748">
    <property type="status" value="NOT_ANNOTATED_CDS"/>
    <property type="molecule type" value="Genomic_DNA"/>
</dbReference>
<dbReference type="CCDS" id="CCDS13920.1"/>
<dbReference type="RefSeq" id="NP_085145.1">
    <property type="nucleotide sequence ID" value="NM_030642.1"/>
</dbReference>
<dbReference type="SMR" id="Q9BWW9"/>
<dbReference type="BioGRID" id="123324">
    <property type="interactions" value="15"/>
</dbReference>
<dbReference type="IntAct" id="Q9BWW9">
    <property type="interactions" value="9"/>
</dbReference>
<dbReference type="STRING" id="9606.ENSP00000249044"/>
<dbReference type="iPTMnet" id="Q9BWW9"/>
<dbReference type="PhosphoSitePlus" id="Q9BWW9"/>
<dbReference type="BioMuta" id="APOL5"/>
<dbReference type="DMDM" id="17433287"/>
<dbReference type="MassIVE" id="Q9BWW9"/>
<dbReference type="PaxDb" id="9606-ENSP00000249044"/>
<dbReference type="ProteomicsDB" id="79336"/>
<dbReference type="TopDownProteomics" id="Q9BWW9"/>
<dbReference type="Antibodypedia" id="25462">
    <property type="antibodies" value="135 antibodies from 29 providers"/>
</dbReference>
<dbReference type="DNASU" id="80831"/>
<dbReference type="Ensembl" id="ENST00000249044.2">
    <property type="protein sequence ID" value="ENSP00000249044.2"/>
    <property type="gene ID" value="ENSG00000128313.2"/>
</dbReference>
<dbReference type="GeneID" id="80831"/>
<dbReference type="KEGG" id="hsa:80831"/>
<dbReference type="MANE-Select" id="ENST00000249044.2">
    <property type="protein sequence ID" value="ENSP00000249044.2"/>
    <property type="RefSeq nucleotide sequence ID" value="NM_030642.1"/>
    <property type="RefSeq protein sequence ID" value="NP_085145.1"/>
</dbReference>
<dbReference type="UCSC" id="uc003aof.4">
    <property type="organism name" value="human"/>
</dbReference>
<dbReference type="AGR" id="HGNC:14869"/>
<dbReference type="CTD" id="80831"/>
<dbReference type="DisGeNET" id="80831"/>
<dbReference type="GeneCards" id="APOL5"/>
<dbReference type="HGNC" id="HGNC:14869">
    <property type="gene designation" value="APOL5"/>
</dbReference>
<dbReference type="HPA" id="ENSG00000128313">
    <property type="expression patterns" value="Tissue enhanced (skeletal muscle, tongue)"/>
</dbReference>
<dbReference type="MIM" id="607255">
    <property type="type" value="gene"/>
</dbReference>
<dbReference type="neXtProt" id="NX_Q9BWW9"/>
<dbReference type="OpenTargets" id="ENSG00000128313"/>
<dbReference type="PharmGKB" id="PA24908"/>
<dbReference type="VEuPathDB" id="HostDB:ENSG00000128313"/>
<dbReference type="eggNOG" id="ENOG502T3KK">
    <property type="taxonomic scope" value="Eukaryota"/>
</dbReference>
<dbReference type="GeneTree" id="ENSGT01030000234599"/>
<dbReference type="HOGENOM" id="CLU_046288_0_1_1"/>
<dbReference type="InParanoid" id="Q9BWW9"/>
<dbReference type="OMA" id="PLHKFEL"/>
<dbReference type="OrthoDB" id="6363454at2759"/>
<dbReference type="PAN-GO" id="Q9BWW9">
    <property type="GO annotations" value="1 GO annotation based on evolutionary models"/>
</dbReference>
<dbReference type="PhylomeDB" id="Q9BWW9"/>
<dbReference type="TreeFam" id="TF334681"/>
<dbReference type="PathwayCommons" id="Q9BWW9"/>
<dbReference type="SignaLink" id="Q9BWW9"/>
<dbReference type="BioGRID-ORCS" id="80831">
    <property type="hits" value="16 hits in 1143 CRISPR screens"/>
</dbReference>
<dbReference type="GenomeRNAi" id="80831"/>
<dbReference type="Pharos" id="Q9BWW9">
    <property type="development level" value="Tdark"/>
</dbReference>
<dbReference type="PRO" id="PR:Q9BWW9"/>
<dbReference type="Proteomes" id="UP000005640">
    <property type="component" value="Chromosome 22"/>
</dbReference>
<dbReference type="RNAct" id="Q9BWW9">
    <property type="molecule type" value="protein"/>
</dbReference>
<dbReference type="Bgee" id="ENSG00000128313">
    <property type="expression patterns" value="Expressed in male germ line stem cell (sensu Vertebrata) in testis and 25 other cell types or tissues"/>
</dbReference>
<dbReference type="GO" id="GO:0005737">
    <property type="term" value="C:cytoplasm"/>
    <property type="evidence" value="ECO:0007669"/>
    <property type="project" value="UniProtKB-SubCell"/>
</dbReference>
<dbReference type="GO" id="GO:0005576">
    <property type="term" value="C:extracellular region"/>
    <property type="evidence" value="ECO:0007669"/>
    <property type="project" value="InterPro"/>
</dbReference>
<dbReference type="GO" id="GO:0008035">
    <property type="term" value="F:high-density lipoprotein particle binding"/>
    <property type="evidence" value="ECO:0000303"/>
    <property type="project" value="UniProtKB"/>
</dbReference>
<dbReference type="GO" id="GO:0008289">
    <property type="term" value="F:lipid binding"/>
    <property type="evidence" value="ECO:0000318"/>
    <property type="project" value="GO_Central"/>
</dbReference>
<dbReference type="GO" id="GO:0006629">
    <property type="term" value="P:lipid metabolic process"/>
    <property type="evidence" value="ECO:0000303"/>
    <property type="project" value="UniProtKB"/>
</dbReference>
<dbReference type="GO" id="GO:0006869">
    <property type="term" value="P:lipid transport"/>
    <property type="evidence" value="ECO:0007669"/>
    <property type="project" value="UniProtKB-KW"/>
</dbReference>
<dbReference type="GO" id="GO:0042157">
    <property type="term" value="P:lipoprotein metabolic process"/>
    <property type="evidence" value="ECO:0007669"/>
    <property type="project" value="InterPro"/>
</dbReference>
<dbReference type="InterPro" id="IPR008405">
    <property type="entry name" value="ApoL"/>
</dbReference>
<dbReference type="PANTHER" id="PTHR14096">
    <property type="entry name" value="APOLIPOPROTEIN L"/>
    <property type="match status" value="1"/>
</dbReference>
<dbReference type="PANTHER" id="PTHR14096:SF6">
    <property type="entry name" value="APOLIPOPROTEIN L5"/>
    <property type="match status" value="1"/>
</dbReference>
<dbReference type="Pfam" id="PF05461">
    <property type="entry name" value="ApoL"/>
    <property type="match status" value="1"/>
</dbReference>
<keyword id="KW-0963">Cytoplasm</keyword>
<keyword id="KW-0445">Lipid transport</keyword>
<keyword id="KW-1185">Reference proteome</keyword>
<keyword id="KW-0813">Transport</keyword>
<reference key="1">
    <citation type="journal article" date="2001" name="Genomics">
        <title>The human apolipoprotein L gene cluster: identification, classification, and sites of distribution.</title>
        <authorList>
            <person name="Page N.M."/>
            <person name="Butlin D.J."/>
            <person name="Lomthaisong K."/>
            <person name="Lowry P.J."/>
        </authorList>
    </citation>
    <scope>NUCLEOTIDE SEQUENCE [MRNA]</scope>
    <source>
        <tissue>Placenta</tissue>
    </source>
</reference>
<reference key="2">
    <citation type="journal article" date="1999" name="Nature">
        <title>The DNA sequence of human chromosome 22.</title>
        <authorList>
            <person name="Dunham I."/>
            <person name="Hunt A.R."/>
            <person name="Collins J.E."/>
            <person name="Bruskiewich R."/>
            <person name="Beare D.M."/>
            <person name="Clamp M."/>
            <person name="Smink L.J."/>
            <person name="Ainscough R."/>
            <person name="Almeida J.P."/>
            <person name="Babbage A.K."/>
            <person name="Bagguley C."/>
            <person name="Bailey J."/>
            <person name="Barlow K.F."/>
            <person name="Bates K.N."/>
            <person name="Beasley O.P."/>
            <person name="Bird C.P."/>
            <person name="Blakey S.E."/>
            <person name="Bridgeman A.M."/>
            <person name="Buck D."/>
            <person name="Burgess J."/>
            <person name="Burrill W.D."/>
            <person name="Burton J."/>
            <person name="Carder C."/>
            <person name="Carter N.P."/>
            <person name="Chen Y."/>
            <person name="Clark G."/>
            <person name="Clegg S.M."/>
            <person name="Cobley V.E."/>
            <person name="Cole C.G."/>
            <person name="Collier R.E."/>
            <person name="Connor R."/>
            <person name="Conroy D."/>
            <person name="Corby N.R."/>
            <person name="Coville G.J."/>
            <person name="Cox A.V."/>
            <person name="Davis J."/>
            <person name="Dawson E."/>
            <person name="Dhami P.D."/>
            <person name="Dockree C."/>
            <person name="Dodsworth S.J."/>
            <person name="Durbin R.M."/>
            <person name="Ellington A.G."/>
            <person name="Evans K.L."/>
            <person name="Fey J.M."/>
            <person name="Fleming K."/>
            <person name="French L."/>
            <person name="Garner A.A."/>
            <person name="Gilbert J.G.R."/>
            <person name="Goward M.E."/>
            <person name="Grafham D.V."/>
            <person name="Griffiths M.N.D."/>
            <person name="Hall C."/>
            <person name="Hall R.E."/>
            <person name="Hall-Tamlyn G."/>
            <person name="Heathcott R.W."/>
            <person name="Ho S."/>
            <person name="Holmes S."/>
            <person name="Hunt S.E."/>
            <person name="Jones M.C."/>
            <person name="Kershaw J."/>
            <person name="Kimberley A.M."/>
            <person name="King A."/>
            <person name="Laird G.K."/>
            <person name="Langford C.F."/>
            <person name="Leversha M.A."/>
            <person name="Lloyd C."/>
            <person name="Lloyd D.M."/>
            <person name="Martyn I.D."/>
            <person name="Mashreghi-Mohammadi M."/>
            <person name="Matthews L.H."/>
            <person name="Mccann O.T."/>
            <person name="Mcclay J."/>
            <person name="Mclaren S."/>
            <person name="McMurray A.A."/>
            <person name="Milne S.A."/>
            <person name="Mortimore B.J."/>
            <person name="Odell C.N."/>
            <person name="Pavitt R."/>
            <person name="Pearce A.V."/>
            <person name="Pearson D."/>
            <person name="Phillimore B.J.C.T."/>
            <person name="Phillips S.H."/>
            <person name="Plumb R.W."/>
            <person name="Ramsay H."/>
            <person name="Ramsey Y."/>
            <person name="Rogers L."/>
            <person name="Ross M.T."/>
            <person name="Scott C.E."/>
            <person name="Sehra H.K."/>
            <person name="Skuce C.D."/>
            <person name="Smalley S."/>
            <person name="Smith M.L."/>
            <person name="Soderlund C."/>
            <person name="Spragon L."/>
            <person name="Steward C.A."/>
            <person name="Sulston J.E."/>
            <person name="Swann R.M."/>
            <person name="Vaudin M."/>
            <person name="Wall M."/>
            <person name="Wallis J.M."/>
            <person name="Whiteley M.N."/>
            <person name="Willey D.L."/>
            <person name="Williams L."/>
            <person name="Williams S.A."/>
            <person name="Williamson H."/>
            <person name="Wilmer T.E."/>
            <person name="Wilming L."/>
            <person name="Wright C.L."/>
            <person name="Hubbard T."/>
            <person name="Bentley D.R."/>
            <person name="Beck S."/>
            <person name="Rogers J."/>
            <person name="Shimizu N."/>
            <person name="Minoshima S."/>
            <person name="Kawasaki K."/>
            <person name="Sasaki T."/>
            <person name="Asakawa S."/>
            <person name="Kudoh J."/>
            <person name="Shintani A."/>
            <person name="Shibuya K."/>
            <person name="Yoshizaki Y."/>
            <person name="Aoki N."/>
            <person name="Mitsuyama S."/>
            <person name="Roe B.A."/>
            <person name="Chen F."/>
            <person name="Chu L."/>
            <person name="Crabtree J."/>
            <person name="Deschamps S."/>
            <person name="Do A."/>
            <person name="Do T."/>
            <person name="Dorman A."/>
            <person name="Fang F."/>
            <person name="Fu Y."/>
            <person name="Hu P."/>
            <person name="Hua A."/>
            <person name="Kenton S."/>
            <person name="Lai H."/>
            <person name="Lao H.I."/>
            <person name="Lewis J."/>
            <person name="Lewis S."/>
            <person name="Lin S.-P."/>
            <person name="Loh P."/>
            <person name="Malaj E."/>
            <person name="Nguyen T."/>
            <person name="Pan H."/>
            <person name="Phan S."/>
            <person name="Qi S."/>
            <person name="Qian Y."/>
            <person name="Ray L."/>
            <person name="Ren Q."/>
            <person name="Shaull S."/>
            <person name="Sloan D."/>
            <person name="Song L."/>
            <person name="Wang Q."/>
            <person name="Wang Y."/>
            <person name="Wang Z."/>
            <person name="White J."/>
            <person name="Willingham D."/>
            <person name="Wu H."/>
            <person name="Yao Z."/>
            <person name="Zhan M."/>
            <person name="Zhang G."/>
            <person name="Chissoe S."/>
            <person name="Murray J."/>
            <person name="Miller N."/>
            <person name="Minx P."/>
            <person name="Fulton R."/>
            <person name="Johnson D."/>
            <person name="Bemis G."/>
            <person name="Bentley D."/>
            <person name="Bradshaw H."/>
            <person name="Bourne S."/>
            <person name="Cordes M."/>
            <person name="Du Z."/>
            <person name="Fulton L."/>
            <person name="Goela D."/>
            <person name="Graves T."/>
            <person name="Hawkins J."/>
            <person name="Hinds K."/>
            <person name="Kemp K."/>
            <person name="Latreille P."/>
            <person name="Layman D."/>
            <person name="Ozersky P."/>
            <person name="Rohlfing T."/>
            <person name="Scheet P."/>
            <person name="Walker C."/>
            <person name="Wamsley A."/>
            <person name="Wohldmann P."/>
            <person name="Pepin K."/>
            <person name="Nelson J."/>
            <person name="Korf I."/>
            <person name="Bedell J.A."/>
            <person name="Hillier L.W."/>
            <person name="Mardis E."/>
            <person name="Waterston R."/>
            <person name="Wilson R."/>
            <person name="Emanuel B.S."/>
            <person name="Shaikh T."/>
            <person name="Kurahashi H."/>
            <person name="Saitta S."/>
            <person name="Budarf M.L."/>
            <person name="McDermid H.E."/>
            <person name="Johnson A."/>
            <person name="Wong A.C.C."/>
            <person name="Morrow B.E."/>
            <person name="Edelmann L."/>
            <person name="Kim U.J."/>
            <person name="Shizuya H."/>
            <person name="Simon M.I."/>
            <person name="Dumanski J.P."/>
            <person name="Peyrard M."/>
            <person name="Kedra D."/>
            <person name="Seroussi E."/>
            <person name="Fransson I."/>
            <person name="Tapia I."/>
            <person name="Bruder C.E."/>
            <person name="O'Brien K.P."/>
            <person name="Wilkinson P."/>
            <person name="Bodenteich A."/>
            <person name="Hartman K."/>
            <person name="Hu X."/>
            <person name="Khan A.S."/>
            <person name="Lane L."/>
            <person name="Tilahun Y."/>
            <person name="Wright H."/>
        </authorList>
    </citation>
    <scope>NUCLEOTIDE SEQUENCE [LARGE SCALE GENOMIC DNA]</scope>
</reference>
<sequence>MPCGKQGNLQVPGSKVLPGLGEGCKEMWLRKVIYGGEVWGKSPEPEFPSLVNLCQSWKINNLMSTVHSDEAGMLSYFLFEELMRCDKDSMPDGNLSEEEKLFLSYFPLHKFELEQNIKELNTLADQVDTTHELLTKTSLVASSSGAVSGVMNILGLALAPVTAGGSLMLSATGTGLGAAAAITNIVTNVLENRSNSAARDKASRLGPLTTSHEAFGGINWSEIEAAGFCVNKCVKAIQGIKDLHAYQMAKSNSGFMAMVKNFVAKRHIPFWTARGVQRAFEGTTLAMTNGAWVMGAAGAGFLLMKDMSSFLQSWKHLEDGARTETAEELRALAKKLEQELDRLTQHHRHLPQKASQTCSSSRGRAVRGSRVVKPEGSRSPLPWPVVEHQPRLGPGVALRTPKRTVSAPRMLGHQPAPPAPARKGRQAPGRHRQ</sequence>
<name>APOL5_HUMAN</name>
<accession>Q9BWW9</accession>
<accession>Q5TFL9</accession>
<accession>Q9UGW5</accession>
<proteinExistence type="evidence at transcript level"/>
<feature type="chain" id="PRO_0000137603" description="Apolipoprotein L5">
    <location>
        <begin position="1"/>
        <end position="433"/>
    </location>
</feature>
<feature type="region of interest" description="Disordered" evidence="1">
    <location>
        <begin position="346"/>
        <end position="433"/>
    </location>
</feature>
<feature type="compositionally biased region" description="Low complexity" evidence="1">
    <location>
        <begin position="359"/>
        <end position="371"/>
    </location>
</feature>
<feature type="compositionally biased region" description="Basic residues" evidence="1">
    <location>
        <begin position="422"/>
        <end position="433"/>
    </location>
</feature>
<feature type="sequence variant" id="VAR_053012" description="In dbSNP:rs5999985.">
    <original>E</original>
    <variation>K</variation>
    <location>
        <position position="81"/>
    </location>
</feature>
<feature type="sequence variant" id="VAR_020355" description="In dbSNP:rs2076671.">
    <original>T</original>
    <variation>M</variation>
    <location>
        <position position="272"/>
    </location>
</feature>
<feature type="sequence variant" id="VAR_020356" description="In dbSNP:rs2076672.">
    <original>T</original>
    <variation>M</variation>
    <location>
        <position position="323"/>
    </location>
</feature>
<feature type="sequence variant" id="VAR_020357" description="In dbSNP:rs2076673.">
    <original>S</original>
    <variation>C</variation>
    <location>
        <position position="406"/>
    </location>
</feature>
<comment type="function">
    <text>May affect the movement of lipids in the cytoplasm or allow the binding of lipids to organelles.</text>
</comment>
<comment type="subcellular location">
    <subcellularLocation>
        <location evidence="2">Cytoplasm</location>
    </subcellularLocation>
</comment>
<comment type="tissue specificity">
    <text>Low level of expression; detected in uterus, testis, skeletal muscle and stomach.</text>
</comment>
<comment type="similarity">
    <text evidence="2">Belongs to the apolipoprotein L family.</text>
</comment>
<organism>
    <name type="scientific">Homo sapiens</name>
    <name type="common">Human</name>
    <dbReference type="NCBI Taxonomy" id="9606"/>
    <lineage>
        <taxon>Eukaryota</taxon>
        <taxon>Metazoa</taxon>
        <taxon>Chordata</taxon>
        <taxon>Craniata</taxon>
        <taxon>Vertebrata</taxon>
        <taxon>Euteleostomi</taxon>
        <taxon>Mammalia</taxon>
        <taxon>Eutheria</taxon>
        <taxon>Euarchontoglires</taxon>
        <taxon>Primates</taxon>
        <taxon>Haplorrhini</taxon>
        <taxon>Catarrhini</taxon>
        <taxon>Hominidae</taxon>
        <taxon>Homo</taxon>
    </lineage>
</organism>
<evidence type="ECO:0000256" key="1">
    <source>
        <dbReference type="SAM" id="MobiDB-lite"/>
    </source>
</evidence>
<evidence type="ECO:0000305" key="2"/>
<protein>
    <recommendedName>
        <fullName>Apolipoprotein L5</fullName>
    </recommendedName>
    <alternativeName>
        <fullName>Apolipoprotein L-V</fullName>
        <shortName>ApoL-V</shortName>
    </alternativeName>
</protein>